<reference key="1">
    <citation type="journal article" date="2004" name="Nat. Genet.">
        <title>Evidence in the Legionella pneumophila genome for exploitation of host cell functions and high genome plasticity.</title>
        <authorList>
            <person name="Cazalet C."/>
            <person name="Rusniok C."/>
            <person name="Brueggemann H."/>
            <person name="Zidane N."/>
            <person name="Magnier A."/>
            <person name="Ma L."/>
            <person name="Tichit M."/>
            <person name="Jarraud S."/>
            <person name="Bouchier C."/>
            <person name="Vandenesch F."/>
            <person name="Kunst F."/>
            <person name="Etienne J."/>
            <person name="Glaser P."/>
            <person name="Buchrieser C."/>
        </authorList>
    </citation>
    <scope>NUCLEOTIDE SEQUENCE [LARGE SCALE GENOMIC DNA]</scope>
    <source>
        <strain>Lens</strain>
    </source>
</reference>
<evidence type="ECO:0000255" key="1">
    <source>
        <dbReference type="HAMAP-Rule" id="MF_00334"/>
    </source>
</evidence>
<sequence>MYLQGFGNYHHSEAVKGALPPNQNSPQHCSLGLYAEQLSGTSFTRPRHNNLRSWLYRILPTVTQGTYYPYEFNIMQPLVDELSPNAMRWSPLYNSSQIKCDFVEGLFHIAGSPLVNAYTYYCNHSMSDKYFANNDGELLFVPYTGEIHLHTEFGKLMLSSGSIAVIPRGVKFKVEVISKEAKGYLCENSGNPLTLPQLGPIGANGLANPRHFQYPVAAFENSVGEHTIICKNQKKLWFTVCNHSPLNVVAWHGNYAPYCYDLSLFNTINTVSFDHPDPSIFTVLTSESEIPGVSNLDFVIFPPRWMVAEHTFRPPYFHRNYMNELMGLVYGEYDAKKEGFIPGGISIHNCMTPHGPDYESYEIAASQDLKPNYINSLAFMFETKDYWQVTEQAYRHPSRQIDYLNCWQGFKIEFSQ</sequence>
<comment type="function">
    <text evidence="1">Involved in the catabolism of homogentisate (2,5-dihydroxyphenylacetate or 2,5-OH-PhAc), a central intermediate in the degradation of phenylalanine and tyrosine. Catalyzes the oxidative ring cleavage of the aromatic ring of homogentisate to yield maleylacetoacetate.</text>
</comment>
<comment type="catalytic activity">
    <reaction evidence="1">
        <text>homogentisate + O2 = 4-maleylacetoacetate + H(+)</text>
        <dbReference type="Rhea" id="RHEA:15449"/>
        <dbReference type="ChEBI" id="CHEBI:15378"/>
        <dbReference type="ChEBI" id="CHEBI:15379"/>
        <dbReference type="ChEBI" id="CHEBI:16169"/>
        <dbReference type="ChEBI" id="CHEBI:17105"/>
        <dbReference type="EC" id="1.13.11.5"/>
    </reaction>
</comment>
<comment type="cofactor">
    <cofactor evidence="1">
        <name>Fe cation</name>
        <dbReference type="ChEBI" id="CHEBI:24875"/>
    </cofactor>
</comment>
<comment type="pathway">
    <text evidence="1">Amino-acid degradation; L-phenylalanine degradation; acetoacetate and fumarate from L-phenylalanine: step 4/6.</text>
</comment>
<comment type="subunit">
    <text evidence="1">Hexamer; dimer of trimers.</text>
</comment>
<comment type="similarity">
    <text evidence="1">Belongs to the homogentisate dioxygenase family.</text>
</comment>
<organism>
    <name type="scientific">Legionella pneumophila (strain Lens)</name>
    <dbReference type="NCBI Taxonomy" id="297245"/>
    <lineage>
        <taxon>Bacteria</taxon>
        <taxon>Pseudomonadati</taxon>
        <taxon>Pseudomonadota</taxon>
        <taxon>Gammaproteobacteria</taxon>
        <taxon>Legionellales</taxon>
        <taxon>Legionellaceae</taxon>
        <taxon>Legionella</taxon>
    </lineage>
</organism>
<dbReference type="EC" id="1.13.11.5" evidence="1"/>
<dbReference type="EMBL" id="CR628337">
    <property type="protein sequence ID" value="CAH15487.1"/>
    <property type="molecule type" value="Genomic_DNA"/>
</dbReference>
<dbReference type="RefSeq" id="WP_011215332.1">
    <property type="nucleotide sequence ID" value="NC_006369.1"/>
</dbReference>
<dbReference type="SMR" id="Q5WX50"/>
<dbReference type="KEGG" id="lpf:lpl1248"/>
<dbReference type="LegioList" id="lpl1248"/>
<dbReference type="HOGENOM" id="CLU_027174_0_0_6"/>
<dbReference type="UniPathway" id="UPA00139">
    <property type="reaction ID" value="UER00339"/>
</dbReference>
<dbReference type="Proteomes" id="UP000002517">
    <property type="component" value="Chromosome"/>
</dbReference>
<dbReference type="GO" id="GO:0005737">
    <property type="term" value="C:cytoplasm"/>
    <property type="evidence" value="ECO:0007669"/>
    <property type="project" value="TreeGrafter"/>
</dbReference>
<dbReference type="GO" id="GO:0004411">
    <property type="term" value="F:homogentisate 1,2-dioxygenase activity"/>
    <property type="evidence" value="ECO:0007669"/>
    <property type="project" value="UniProtKB-UniRule"/>
</dbReference>
<dbReference type="GO" id="GO:0005506">
    <property type="term" value="F:iron ion binding"/>
    <property type="evidence" value="ECO:0007669"/>
    <property type="project" value="UniProtKB-UniRule"/>
</dbReference>
<dbReference type="GO" id="GO:0006559">
    <property type="term" value="P:L-phenylalanine catabolic process"/>
    <property type="evidence" value="ECO:0007669"/>
    <property type="project" value="UniProtKB-UniRule"/>
</dbReference>
<dbReference type="GO" id="GO:0006572">
    <property type="term" value="P:tyrosine catabolic process"/>
    <property type="evidence" value="ECO:0007669"/>
    <property type="project" value="UniProtKB-UniRule"/>
</dbReference>
<dbReference type="CDD" id="cd07000">
    <property type="entry name" value="cupin_HGO_N"/>
    <property type="match status" value="1"/>
</dbReference>
<dbReference type="FunFam" id="2.60.120.10:FF:000034">
    <property type="entry name" value="Homogentisate 1,2-dioxygenase"/>
    <property type="match status" value="1"/>
</dbReference>
<dbReference type="Gene3D" id="2.60.120.10">
    <property type="entry name" value="Jelly Rolls"/>
    <property type="match status" value="1"/>
</dbReference>
<dbReference type="HAMAP" id="MF_00334">
    <property type="entry name" value="Homogentis_dioxygen"/>
    <property type="match status" value="1"/>
</dbReference>
<dbReference type="InterPro" id="IPR046451">
    <property type="entry name" value="HgmA_C"/>
</dbReference>
<dbReference type="InterPro" id="IPR046452">
    <property type="entry name" value="HgmA_N"/>
</dbReference>
<dbReference type="InterPro" id="IPR005708">
    <property type="entry name" value="Homogentis_dOase"/>
</dbReference>
<dbReference type="InterPro" id="IPR022950">
    <property type="entry name" value="Homogentis_dOase_bac"/>
</dbReference>
<dbReference type="InterPro" id="IPR014710">
    <property type="entry name" value="RmlC-like_jellyroll"/>
</dbReference>
<dbReference type="InterPro" id="IPR011051">
    <property type="entry name" value="RmlC_Cupin_sf"/>
</dbReference>
<dbReference type="NCBIfam" id="TIGR01015">
    <property type="entry name" value="hmgA"/>
    <property type="match status" value="1"/>
</dbReference>
<dbReference type="PANTHER" id="PTHR11056">
    <property type="entry name" value="HOMOGENTISATE 1,2-DIOXYGENASE"/>
    <property type="match status" value="1"/>
</dbReference>
<dbReference type="PANTHER" id="PTHR11056:SF0">
    <property type="entry name" value="HOMOGENTISATE 1,2-DIOXYGENASE"/>
    <property type="match status" value="1"/>
</dbReference>
<dbReference type="Pfam" id="PF04209">
    <property type="entry name" value="HgmA_C"/>
    <property type="match status" value="1"/>
</dbReference>
<dbReference type="Pfam" id="PF20510">
    <property type="entry name" value="HgmA_N"/>
    <property type="match status" value="1"/>
</dbReference>
<dbReference type="SUPFAM" id="SSF51182">
    <property type="entry name" value="RmlC-like cupins"/>
    <property type="match status" value="1"/>
</dbReference>
<proteinExistence type="inferred from homology"/>
<protein>
    <recommendedName>
        <fullName evidence="1">Homogentisate 1,2-dioxygenase</fullName>
        <shortName evidence="1">HGDO</shortName>
        <ecNumber evidence="1">1.13.11.5</ecNumber>
    </recommendedName>
    <alternativeName>
        <fullName evidence="1">Homogentisate oxygenase</fullName>
    </alternativeName>
    <alternativeName>
        <fullName evidence="1">Homogentisic acid oxidase</fullName>
    </alternativeName>
    <alternativeName>
        <fullName evidence="1">Homogentisicase</fullName>
    </alternativeName>
</protein>
<feature type="chain" id="PRO_0000225789" description="Homogentisate 1,2-dioxygenase">
    <location>
        <begin position="1"/>
        <end position="416"/>
    </location>
</feature>
<feature type="active site" description="Proton acceptor" evidence="1">
    <location>
        <position position="275"/>
    </location>
</feature>
<feature type="binding site" evidence="1">
    <location>
        <position position="318"/>
    </location>
    <ligand>
        <name>Fe cation</name>
        <dbReference type="ChEBI" id="CHEBI:24875"/>
    </ligand>
</feature>
<feature type="binding site" evidence="1">
    <location>
        <position position="324"/>
    </location>
    <ligand>
        <name>Fe cation</name>
        <dbReference type="ChEBI" id="CHEBI:24875"/>
    </ligand>
</feature>
<feature type="binding site" evidence="1">
    <location>
        <position position="333"/>
    </location>
    <ligand>
        <name>homogentisate</name>
        <dbReference type="ChEBI" id="CHEBI:16169"/>
    </ligand>
</feature>
<feature type="binding site" evidence="1">
    <location>
        <position position="354"/>
    </location>
    <ligand>
        <name>Fe cation</name>
        <dbReference type="ChEBI" id="CHEBI:24875"/>
    </ligand>
</feature>
<feature type="binding site" evidence="1">
    <location>
        <position position="354"/>
    </location>
    <ligand>
        <name>homogentisate</name>
        <dbReference type="ChEBI" id="CHEBI:16169"/>
    </ligand>
</feature>
<gene>
    <name evidence="1" type="primary">hmgA</name>
    <name type="ordered locus">lpl1248</name>
</gene>
<keyword id="KW-0223">Dioxygenase</keyword>
<keyword id="KW-0408">Iron</keyword>
<keyword id="KW-0479">Metal-binding</keyword>
<keyword id="KW-0560">Oxidoreductase</keyword>
<keyword id="KW-0585">Phenylalanine catabolism</keyword>
<keyword id="KW-0828">Tyrosine catabolism</keyword>
<accession>Q5WX50</accession>
<name>HGD_LEGPL</name>